<dbReference type="EC" id="3.4.21.77"/>
<dbReference type="EMBL" id="M21896">
    <property type="protein sequence ID" value="AAA59996.1"/>
    <property type="molecule type" value="mRNA"/>
</dbReference>
<dbReference type="EMBL" id="X05332">
    <property type="protein sequence ID" value="CAA28947.1"/>
    <property type="molecule type" value="mRNA"/>
</dbReference>
<dbReference type="EMBL" id="X13940">
    <property type="protein sequence ID" value="CAA32123.1"/>
    <property type="molecule type" value="Genomic_DNA"/>
</dbReference>
<dbReference type="EMBL" id="X13941">
    <property type="protein sequence ID" value="CAA32124.1"/>
    <property type="status" value="ALT_SEQ"/>
    <property type="molecule type" value="Genomic_DNA"/>
</dbReference>
<dbReference type="EMBL" id="X13942">
    <property type="protein sequence ID" value="CAB46487.1"/>
    <property type="molecule type" value="Genomic_DNA"/>
</dbReference>
<dbReference type="EMBL" id="X13943">
    <property type="protein sequence ID" value="CAA32126.1"/>
    <property type="molecule type" value="Genomic_DNA"/>
</dbReference>
<dbReference type="EMBL" id="X13944">
    <property type="protein sequence ID" value="CAA32127.1"/>
    <property type="molecule type" value="Genomic_DNA"/>
</dbReference>
<dbReference type="EMBL" id="X14810">
    <property type="protein sequence ID" value="CAA32915.1"/>
    <property type="molecule type" value="Genomic_DNA"/>
</dbReference>
<dbReference type="EMBL" id="M27274">
    <property type="protein sequence ID" value="AAA60192.1"/>
    <property type="molecule type" value="Genomic_DNA"/>
</dbReference>
<dbReference type="EMBL" id="M26663">
    <property type="protein sequence ID" value="AAA58802.1"/>
    <property type="molecule type" value="mRNA"/>
</dbReference>
<dbReference type="EMBL" id="M24543">
    <property type="protein sequence ID" value="AAA60193.1"/>
    <property type="molecule type" value="Genomic_DNA"/>
</dbReference>
<dbReference type="EMBL" id="U17040">
    <property type="protein sequence ID" value="AAA56764.1"/>
    <property type="molecule type" value="mRNA"/>
</dbReference>
<dbReference type="EMBL" id="AF243527">
    <property type="protein sequence ID" value="AAG33355.1"/>
    <property type="molecule type" value="Genomic_DNA"/>
</dbReference>
<dbReference type="EMBL" id="AJ512346">
    <property type="protein sequence ID" value="CAD54617.1"/>
    <property type="molecule type" value="mRNA"/>
</dbReference>
<dbReference type="EMBL" id="BT019862">
    <property type="protein sequence ID" value="AAV38665.1"/>
    <property type="molecule type" value="mRNA"/>
</dbReference>
<dbReference type="EMBL" id="AC011523">
    <property type="status" value="NOT_ANNOTATED_CDS"/>
    <property type="molecule type" value="Genomic_DNA"/>
</dbReference>
<dbReference type="EMBL" id="CH471135">
    <property type="protein sequence ID" value="EAW71929.1"/>
    <property type="molecule type" value="Genomic_DNA"/>
</dbReference>
<dbReference type="EMBL" id="CH471135">
    <property type="protein sequence ID" value="EAW71930.1"/>
    <property type="molecule type" value="Genomic_DNA"/>
</dbReference>
<dbReference type="EMBL" id="CH471135">
    <property type="protein sequence ID" value="EAW71936.1"/>
    <property type="molecule type" value="Genomic_DNA"/>
</dbReference>
<dbReference type="EMBL" id="BC005307">
    <property type="protein sequence ID" value="AAH05307.1"/>
    <property type="molecule type" value="mRNA"/>
</dbReference>
<dbReference type="EMBL" id="BC050595">
    <property type="protein sequence ID" value="AAH50595.2"/>
    <property type="molecule type" value="mRNA"/>
</dbReference>
<dbReference type="EMBL" id="BC056665">
    <property type="protein sequence ID" value="AAH56665.1"/>
    <property type="molecule type" value="mRNA"/>
</dbReference>
<dbReference type="EMBL" id="BF679511">
    <property type="status" value="NOT_ANNOTATED_CDS"/>
    <property type="molecule type" value="mRNA"/>
</dbReference>
<dbReference type="EMBL" id="BQ932072">
    <property type="status" value="NOT_ANNOTATED_CDS"/>
    <property type="molecule type" value="mRNA"/>
</dbReference>
<dbReference type="EMBL" id="S75755">
    <property type="protein sequence ID" value="AAD14185.1"/>
    <property type="status" value="ALT_INIT"/>
    <property type="molecule type" value="mRNA"/>
</dbReference>
<dbReference type="EMBL" id="X07730">
    <property type="status" value="NOT_ANNOTATED_CDS"/>
    <property type="molecule type" value="mRNA"/>
</dbReference>
<dbReference type="CCDS" id="CCDS12807.1">
    <molecule id="P07288-1"/>
</dbReference>
<dbReference type="CCDS" id="CCDS33083.1">
    <molecule id="P07288-2"/>
</dbReference>
<dbReference type="CCDS" id="CCDS46155.1">
    <molecule id="P07288-3"/>
</dbReference>
<dbReference type="PIR" id="A32297">
    <property type="entry name" value="A32297"/>
</dbReference>
<dbReference type="RefSeq" id="NP_001025218.1">
    <molecule id="P07288-2"/>
    <property type="nucleotide sequence ID" value="NM_001030047.1"/>
</dbReference>
<dbReference type="RefSeq" id="NP_001025219.1">
    <molecule id="P07288-3"/>
    <property type="nucleotide sequence ID" value="NM_001030048.1"/>
</dbReference>
<dbReference type="RefSeq" id="NP_001639.1">
    <molecule id="P07288-1"/>
    <property type="nucleotide sequence ID" value="NM_001648.2"/>
</dbReference>
<dbReference type="PDB" id="2ZCH">
    <property type="method" value="X-ray"/>
    <property type="resolution" value="2.83 A"/>
    <property type="chains" value="P=25-261"/>
</dbReference>
<dbReference type="PDB" id="2ZCK">
    <property type="method" value="X-ray"/>
    <property type="resolution" value="3.10 A"/>
    <property type="chains" value="P=25-261"/>
</dbReference>
<dbReference type="PDB" id="2ZCL">
    <property type="method" value="X-ray"/>
    <property type="resolution" value="3.25 A"/>
    <property type="chains" value="P=25-261"/>
</dbReference>
<dbReference type="PDB" id="3QUM">
    <property type="method" value="X-ray"/>
    <property type="resolution" value="3.20 A"/>
    <property type="chains" value="P/Q=25-261"/>
</dbReference>
<dbReference type="PDB" id="9F1I">
    <property type="method" value="X-ray"/>
    <property type="resolution" value="1.38 A"/>
    <property type="chains" value="P/Q=67-76"/>
</dbReference>
<dbReference type="PDBsum" id="2ZCH"/>
<dbReference type="PDBsum" id="2ZCK"/>
<dbReference type="PDBsum" id="2ZCL"/>
<dbReference type="PDBsum" id="3QUM"/>
<dbReference type="PDBsum" id="9F1I"/>
<dbReference type="SMR" id="P07288"/>
<dbReference type="BioGRID" id="106850">
    <property type="interactions" value="65"/>
</dbReference>
<dbReference type="CORUM" id="P07288"/>
<dbReference type="FunCoup" id="P07288">
    <property type="interactions" value="208"/>
</dbReference>
<dbReference type="IntAct" id="P07288">
    <property type="interactions" value="40"/>
</dbReference>
<dbReference type="MINT" id="P07288"/>
<dbReference type="STRING" id="9606.ENSP00000314151"/>
<dbReference type="BindingDB" id="P07288"/>
<dbReference type="ChEMBL" id="CHEMBL2099"/>
<dbReference type="DrugBank" id="DB04839">
    <property type="generic name" value="Cyproterone acetate"/>
</dbReference>
<dbReference type="DrugBank" id="DB16019">
    <property type="generic name" value="Gallium Ga-68 gozetotide"/>
</dbReference>
<dbReference type="DrugBank" id="DB16778">
    <property type="generic name" value="Lutetium Lu-177 vipivotide tetraxetan"/>
</dbReference>
<dbReference type="DrugBank" id="DB02998">
    <property type="generic name" value="Metribolone"/>
</dbReference>
<dbReference type="DrugBank" id="DB00834">
    <property type="generic name" value="Mifepristone"/>
</dbReference>
<dbReference type="DrugBank" id="DB05296">
    <property type="generic name" value="Motexafin lutetium"/>
</dbReference>
<dbReference type="DrugCentral" id="P07288"/>
<dbReference type="GuidetoPHARMACOLOGY" id="2373"/>
<dbReference type="Allergome" id="2836">
    <property type="allergen name" value="Hom s PSA"/>
</dbReference>
<dbReference type="MEROPS" id="S01.162"/>
<dbReference type="GlyConnect" id="666">
    <property type="glycosylation" value="57 N-Linked glycans (1 site)"/>
</dbReference>
<dbReference type="GlyConnect" id="790">
    <property type="glycosylation" value="167 N-Linked glycans (1 site)"/>
</dbReference>
<dbReference type="GlyCosmos" id="P07288">
    <property type="glycosylation" value="1 site, 176 glycans"/>
</dbReference>
<dbReference type="GlyGen" id="P07288">
    <property type="glycosylation" value="2 sites, 191 N-linked glycans (1 site)"/>
</dbReference>
<dbReference type="iPTMnet" id="P07288"/>
<dbReference type="PhosphoSitePlus" id="P07288"/>
<dbReference type="SwissPalm" id="P07288"/>
<dbReference type="BioMuta" id="KLK3"/>
<dbReference type="DMDM" id="130989"/>
<dbReference type="CPTAC" id="CPTAC-1296"/>
<dbReference type="CPTAC" id="CPTAC-1476"/>
<dbReference type="MassIVE" id="P07288"/>
<dbReference type="PaxDb" id="9606-ENSP00000314151"/>
<dbReference type="PeptideAtlas" id="P07288"/>
<dbReference type="ProteomicsDB" id="12120"/>
<dbReference type="ProteomicsDB" id="32197"/>
<dbReference type="ProteomicsDB" id="33725"/>
<dbReference type="ProteomicsDB" id="51977">
    <molecule id="P07288-1"/>
</dbReference>
<dbReference type="ABCD" id="P07288">
    <property type="antibodies" value="9 sequenced antibodies"/>
</dbReference>
<dbReference type="Antibodypedia" id="743">
    <property type="antibodies" value="2587 antibodies from 53 providers"/>
</dbReference>
<dbReference type="DNASU" id="354"/>
<dbReference type="Ensembl" id="ENST00000326003.7">
    <molecule id="P07288-1"/>
    <property type="protein sequence ID" value="ENSP00000314151.1"/>
    <property type="gene ID" value="ENSG00000142515.16"/>
</dbReference>
<dbReference type="Ensembl" id="ENST00000360617.7">
    <molecule id="P07288-2"/>
    <property type="protein sequence ID" value="ENSP00000353829.2"/>
    <property type="gene ID" value="ENSG00000142515.16"/>
</dbReference>
<dbReference type="Ensembl" id="ENST00000593997.5">
    <molecule id="P07288-5"/>
    <property type="protein sequence ID" value="ENSP00000472907.1"/>
    <property type="gene ID" value="ENSG00000142515.16"/>
</dbReference>
<dbReference type="Ensembl" id="ENST00000595952.5">
    <molecule id="P07288-3"/>
    <property type="protein sequence ID" value="ENSP00000471155.1"/>
    <property type="gene ID" value="ENSG00000142515.16"/>
</dbReference>
<dbReference type="GeneID" id="354"/>
<dbReference type="KEGG" id="hsa:354"/>
<dbReference type="MANE-Select" id="ENST00000326003.7">
    <property type="protein sequence ID" value="ENSP00000314151.1"/>
    <property type="RefSeq nucleotide sequence ID" value="NM_001648.2"/>
    <property type="RefSeq protein sequence ID" value="NP_001639.1"/>
</dbReference>
<dbReference type="UCSC" id="uc002ptr.2">
    <molecule id="P07288-1"/>
    <property type="organism name" value="human"/>
</dbReference>
<dbReference type="AGR" id="HGNC:6364"/>
<dbReference type="CTD" id="354"/>
<dbReference type="DisGeNET" id="354"/>
<dbReference type="GeneCards" id="KLK3"/>
<dbReference type="HGNC" id="HGNC:6364">
    <property type="gene designation" value="KLK3"/>
</dbReference>
<dbReference type="HPA" id="ENSG00000142515">
    <property type="expression patterns" value="Tissue enriched (prostate)"/>
</dbReference>
<dbReference type="MIM" id="176820">
    <property type="type" value="gene"/>
</dbReference>
<dbReference type="neXtProt" id="NX_P07288"/>
<dbReference type="OpenTargets" id="ENSG00000142515"/>
<dbReference type="PharmGKB" id="PA164741810"/>
<dbReference type="VEuPathDB" id="HostDB:ENSG00000142515"/>
<dbReference type="eggNOG" id="KOG3627">
    <property type="taxonomic scope" value="Eukaryota"/>
</dbReference>
<dbReference type="GeneTree" id="ENSGT01020000230389"/>
<dbReference type="HOGENOM" id="CLU_006842_1_1_1"/>
<dbReference type="InParanoid" id="P07288"/>
<dbReference type="OMA" id="IGGRECL"/>
<dbReference type="OrthoDB" id="546450at2759"/>
<dbReference type="PAN-GO" id="P07288">
    <property type="GO annotations" value="3 GO annotations based on evolutionary models"/>
</dbReference>
<dbReference type="PhylomeDB" id="P07288"/>
<dbReference type="TreeFam" id="TF331065"/>
<dbReference type="BRENDA" id="3.4.21.77">
    <property type="organism ID" value="2681"/>
</dbReference>
<dbReference type="PathwayCommons" id="P07288"/>
<dbReference type="Reactome" id="R-HSA-381426">
    <property type="pathway name" value="Regulation of Insulin-like Growth Factor (IGF) transport and uptake by Insulin-like Growth Factor Binding Proteins (IGFBPs)"/>
</dbReference>
<dbReference type="Reactome" id="R-HSA-5625886">
    <property type="pathway name" value="Activated PKN1 stimulates transcription of AR (androgen receptor) regulated genes KLK2 and KLK3"/>
</dbReference>
<dbReference type="SignaLink" id="P07288"/>
<dbReference type="SIGNOR" id="P07288"/>
<dbReference type="BioGRID-ORCS" id="354">
    <property type="hits" value="8 hits in 1149 CRISPR screens"/>
</dbReference>
<dbReference type="ChiTaRS" id="KLK3">
    <property type="organism name" value="human"/>
</dbReference>
<dbReference type="EvolutionaryTrace" id="P07288"/>
<dbReference type="GeneWiki" id="Prostate-specific_antigen"/>
<dbReference type="GenomeRNAi" id="354"/>
<dbReference type="Pharos" id="P07288">
    <property type="development level" value="Tclin"/>
</dbReference>
<dbReference type="PRO" id="PR:P07288"/>
<dbReference type="Proteomes" id="UP000005640">
    <property type="component" value="Chromosome 19"/>
</dbReference>
<dbReference type="RNAct" id="P07288">
    <property type="molecule type" value="protein"/>
</dbReference>
<dbReference type="Bgee" id="ENSG00000142515">
    <property type="expression patterns" value="Expressed in prostate gland and 123 other cell types or tissues"/>
</dbReference>
<dbReference type="ExpressionAtlas" id="P07288">
    <property type="expression patterns" value="baseline and differential"/>
</dbReference>
<dbReference type="GO" id="GO:0070062">
    <property type="term" value="C:extracellular exosome"/>
    <property type="evidence" value="ECO:0007005"/>
    <property type="project" value="UniProtKB"/>
</dbReference>
<dbReference type="GO" id="GO:0005576">
    <property type="term" value="C:extracellular region"/>
    <property type="evidence" value="ECO:0000304"/>
    <property type="project" value="Reactome"/>
</dbReference>
<dbReference type="GO" id="GO:0005615">
    <property type="term" value="C:extracellular space"/>
    <property type="evidence" value="ECO:0000314"/>
    <property type="project" value="UniProtKB"/>
</dbReference>
<dbReference type="GO" id="GO:0005634">
    <property type="term" value="C:nucleus"/>
    <property type="evidence" value="ECO:0007005"/>
    <property type="project" value="UniProtKB"/>
</dbReference>
<dbReference type="GO" id="GO:0032991">
    <property type="term" value="C:protein-containing complex"/>
    <property type="evidence" value="ECO:0000314"/>
    <property type="project" value="UniProtKB"/>
</dbReference>
<dbReference type="GO" id="GO:0030141">
    <property type="term" value="C:secretory granule"/>
    <property type="evidence" value="ECO:0000318"/>
    <property type="project" value="GO_Central"/>
</dbReference>
<dbReference type="GO" id="GO:0004175">
    <property type="term" value="F:endopeptidase activity"/>
    <property type="evidence" value="ECO:0000314"/>
    <property type="project" value="UniProtKB"/>
</dbReference>
<dbReference type="GO" id="GO:0016811">
    <property type="term" value="F:hydrolase activity, acting on carbon-nitrogen (but not peptide) bonds, in linear amides"/>
    <property type="evidence" value="ECO:0000315"/>
    <property type="project" value="UniProtKB"/>
</dbReference>
<dbReference type="GO" id="GO:0004252">
    <property type="term" value="F:serine-type endopeptidase activity"/>
    <property type="evidence" value="ECO:0000315"/>
    <property type="project" value="UniProtKB"/>
</dbReference>
<dbReference type="GO" id="GO:0008236">
    <property type="term" value="F:serine-type peptidase activity"/>
    <property type="evidence" value="ECO:0000304"/>
    <property type="project" value="ProtInc"/>
</dbReference>
<dbReference type="GO" id="GO:0016525">
    <property type="term" value="P:negative regulation of angiogenesis"/>
    <property type="evidence" value="ECO:0000303"/>
    <property type="project" value="UniProtKB"/>
</dbReference>
<dbReference type="GO" id="GO:0002803">
    <property type="term" value="P:positive regulation of antibacterial peptide production"/>
    <property type="evidence" value="ECO:0000314"/>
    <property type="project" value="UniProtKB"/>
</dbReference>
<dbReference type="GO" id="GO:0006508">
    <property type="term" value="P:proteolysis"/>
    <property type="evidence" value="ECO:0000315"/>
    <property type="project" value="UniProtKB"/>
</dbReference>
<dbReference type="GO" id="GO:0003073">
    <property type="term" value="P:regulation of systemic arterial blood pressure"/>
    <property type="evidence" value="ECO:0000318"/>
    <property type="project" value="GO_Central"/>
</dbReference>
<dbReference type="GO" id="GO:0031638">
    <property type="term" value="P:zymogen activation"/>
    <property type="evidence" value="ECO:0000318"/>
    <property type="project" value="GO_Central"/>
</dbReference>
<dbReference type="CDD" id="cd00190">
    <property type="entry name" value="Tryp_SPc"/>
    <property type="match status" value="1"/>
</dbReference>
<dbReference type="FunFam" id="2.40.10.10:FF:000032">
    <property type="entry name" value="Kallikrein 1-related peptidase C9"/>
    <property type="match status" value="1"/>
</dbReference>
<dbReference type="FunFam" id="2.40.10.10:FF:000042">
    <property type="entry name" value="Kallikrein 1-related peptidase C9"/>
    <property type="match status" value="1"/>
</dbReference>
<dbReference type="Gene3D" id="2.40.10.10">
    <property type="entry name" value="Trypsin-like serine proteases"/>
    <property type="match status" value="2"/>
</dbReference>
<dbReference type="InterPro" id="IPR009003">
    <property type="entry name" value="Peptidase_S1_PA"/>
</dbReference>
<dbReference type="InterPro" id="IPR043504">
    <property type="entry name" value="Peptidase_S1_PA_chymotrypsin"/>
</dbReference>
<dbReference type="InterPro" id="IPR001314">
    <property type="entry name" value="Peptidase_S1A"/>
</dbReference>
<dbReference type="InterPro" id="IPR001254">
    <property type="entry name" value="Trypsin_dom"/>
</dbReference>
<dbReference type="InterPro" id="IPR018114">
    <property type="entry name" value="TRYPSIN_HIS"/>
</dbReference>
<dbReference type="InterPro" id="IPR033116">
    <property type="entry name" value="TRYPSIN_SER"/>
</dbReference>
<dbReference type="PANTHER" id="PTHR24271">
    <property type="entry name" value="KALLIKREIN-RELATED"/>
    <property type="match status" value="1"/>
</dbReference>
<dbReference type="PANTHER" id="PTHR24271:SF73">
    <property type="entry name" value="PROSTATE-SPECIFIC ANTIGEN"/>
    <property type="match status" value="1"/>
</dbReference>
<dbReference type="Pfam" id="PF00089">
    <property type="entry name" value="Trypsin"/>
    <property type="match status" value="1"/>
</dbReference>
<dbReference type="PRINTS" id="PR00722">
    <property type="entry name" value="CHYMOTRYPSIN"/>
</dbReference>
<dbReference type="SMART" id="SM00020">
    <property type="entry name" value="Tryp_SPc"/>
    <property type="match status" value="1"/>
</dbReference>
<dbReference type="SUPFAM" id="SSF50494">
    <property type="entry name" value="Trypsin-like serine proteases"/>
    <property type="match status" value="1"/>
</dbReference>
<dbReference type="PROSITE" id="PS50240">
    <property type="entry name" value="TRYPSIN_DOM"/>
    <property type="match status" value="1"/>
</dbReference>
<dbReference type="PROSITE" id="PS00134">
    <property type="entry name" value="TRYPSIN_HIS"/>
    <property type="match status" value="1"/>
</dbReference>
<dbReference type="PROSITE" id="PS00135">
    <property type="entry name" value="TRYPSIN_SER"/>
    <property type="match status" value="1"/>
</dbReference>
<name>KLK3_HUMAN</name>
<keyword id="KW-0002">3D-structure</keyword>
<keyword id="KW-0025">Alternative splicing</keyword>
<keyword id="KW-0903">Direct protein sequencing</keyword>
<keyword id="KW-1015">Disulfide bond</keyword>
<keyword id="KW-0325">Glycoprotein</keyword>
<keyword id="KW-0378">Hydrolase</keyword>
<keyword id="KW-0645">Protease</keyword>
<keyword id="KW-1267">Proteomics identification</keyword>
<keyword id="KW-1185">Reference proteome</keyword>
<keyword id="KW-0964">Secreted</keyword>
<keyword id="KW-0720">Serine protease</keyword>
<keyword id="KW-0732">Signal</keyword>
<keyword id="KW-0865">Zymogen</keyword>
<comment type="function">
    <text>Hydrolyzes semenogelin-1 thus leading to the liquefaction of the seminal coagulum.</text>
</comment>
<comment type="catalytic activity">
    <reaction>
        <text>Preferential cleavage: -Tyr-|-Xaa-.</text>
        <dbReference type="EC" id="3.4.21.77"/>
    </reaction>
</comment>
<comment type="activity regulation">
    <text evidence="3 4">Inhibited by SERPINA5. Activity is strongly inhibited by Zn2+, 100 times more abundant in semen than in serum. This inhibition is relieved by exposure to semenogelins, which are avid zinc binders.</text>
</comment>
<comment type="subunit">
    <text evidence="4">Forms a heterodimer with SERPINA5.</text>
</comment>
<comment type="subcellular location">
    <subcellularLocation>
        <location>Secreted</location>
    </subcellularLocation>
</comment>
<comment type="alternative products">
    <event type="alternative splicing"/>
    <isoform>
        <id>P07288-1</id>
        <name>1</name>
        <sequence type="displayed"/>
    </isoform>
    <isoform>
        <id>P07288-2</id>
        <name>2</name>
        <sequence type="described" ref="VSP_045786"/>
    </isoform>
    <isoform>
        <id>P07288-3</id>
        <name>3</name>
        <sequence type="described" ref="VSP_046169 VSP_046171"/>
    </isoform>
    <isoform>
        <id>P07288-4</id>
        <name>4</name>
        <sequence type="described" ref="VSP_046169 VSP_046170"/>
    </isoform>
    <isoform>
        <id>P07288-5</id>
        <name>5</name>
        <sequence type="described" ref="VSP_047643"/>
    </isoform>
</comment>
<comment type="similarity">
    <text evidence="1">Belongs to the peptidase S1 family. Kallikrein subfamily.</text>
</comment>
<comment type="sequence caution" evidence="11">
    <conflict type="erroneous initiation">
        <sequence resource="EMBL-CDS" id="AAD14185"/>
    </conflict>
    <text>Extended N-terminus.</text>
</comment>
<comment type="sequence caution" evidence="11">
    <conflict type="miscellaneous discrepancy">
        <sequence resource="EMBL-CDS" id="CAA32124"/>
    </conflict>
</comment>
<comment type="online information" name="Wikipedia">
    <link uri="https://en.wikipedia.org/wiki/Prostate_specific_antigen"/>
    <text>Prostate-specific antigen entry</text>
</comment>
<sequence>MWVPVVFLTLSVTWIGAAPLILSRIVGGWECEKHSQPWQVLVASRGRAVCGGVLVHPQWVLTAAHCIRNKSVILLGRHSLFHPEDTGQVFQVSHSFPHPLYDMSLLKNRFLRPGDDSSHDLMLLRLSEPAELTDAVKVMDLPTQEPALGTTCYASGWGSIEPEEFLTPKKLQCVDLHVISNDVCAQVHPQKVTKFMLCAGRWTGGKSTCSGDSGGPLVCNGVLQGITSWGSEPCALPERPSLYTKVVHYRKWIKDTIVANP</sequence>
<protein>
    <recommendedName>
        <fullName>Prostate-specific antigen</fullName>
        <shortName>PSA</shortName>
        <ecNumber>3.4.21.77</ecNumber>
    </recommendedName>
    <alternativeName>
        <fullName>Gamma-seminoprotein</fullName>
        <shortName>Seminin</shortName>
    </alternativeName>
    <alternativeName>
        <fullName>Kallikrein-3</fullName>
    </alternativeName>
    <alternativeName>
        <fullName>P-30 antigen</fullName>
    </alternativeName>
    <alternativeName>
        <fullName>Semenogelase</fullName>
    </alternativeName>
</protein>
<organism>
    <name type="scientific">Homo sapiens</name>
    <name type="common">Human</name>
    <dbReference type="NCBI Taxonomy" id="9606"/>
    <lineage>
        <taxon>Eukaryota</taxon>
        <taxon>Metazoa</taxon>
        <taxon>Chordata</taxon>
        <taxon>Craniata</taxon>
        <taxon>Vertebrata</taxon>
        <taxon>Euteleostomi</taxon>
        <taxon>Mammalia</taxon>
        <taxon>Eutheria</taxon>
        <taxon>Euarchontoglires</taxon>
        <taxon>Primates</taxon>
        <taxon>Haplorrhini</taxon>
        <taxon>Catarrhini</taxon>
        <taxon>Hominidae</taxon>
        <taxon>Homo</taxon>
    </lineage>
</organism>
<evidence type="ECO:0000255" key="1">
    <source>
        <dbReference type="PROSITE-ProRule" id="PRU00274"/>
    </source>
</evidence>
<evidence type="ECO:0000269" key="2">
    <source>
    </source>
</evidence>
<evidence type="ECO:0000269" key="3">
    <source>
    </source>
</evidence>
<evidence type="ECO:0000269" key="4">
    <source>
    </source>
</evidence>
<evidence type="ECO:0000269" key="5">
    <source>
    </source>
</evidence>
<evidence type="ECO:0000269" key="6">
    <source>
    </source>
</evidence>
<evidence type="ECO:0000269" key="7">
    <source>
    </source>
</evidence>
<evidence type="ECO:0000303" key="8">
    <source>
    </source>
</evidence>
<evidence type="ECO:0000303" key="9">
    <source>
    </source>
</evidence>
<evidence type="ECO:0000303" key="10">
    <source ref="9"/>
</evidence>
<evidence type="ECO:0000305" key="11"/>
<evidence type="ECO:0007829" key="12">
    <source>
        <dbReference type="PDB" id="2ZCH"/>
    </source>
</evidence>
<evidence type="ECO:0007829" key="13">
    <source>
        <dbReference type="PDB" id="2ZCK"/>
    </source>
</evidence>
<evidence type="ECO:0007829" key="14">
    <source>
        <dbReference type="PDB" id="2ZCL"/>
    </source>
</evidence>
<evidence type="ECO:0007829" key="15">
    <source>
        <dbReference type="PDB" id="9F1I"/>
    </source>
</evidence>
<gene>
    <name type="primary">KLK3</name>
    <name type="synonym">APS</name>
</gene>
<feature type="signal peptide" evidence="2">
    <location>
        <begin position="1"/>
        <end position="17"/>
    </location>
</feature>
<feature type="propeptide" id="PRO_0000027931" description="Activation peptide" evidence="6 7">
    <location>
        <begin position="18"/>
        <end position="24"/>
    </location>
</feature>
<feature type="chain" id="PRO_0000027932" description="Prostate-specific antigen">
    <location>
        <begin position="25"/>
        <end position="261"/>
    </location>
</feature>
<feature type="domain" description="Peptidase S1" evidence="1">
    <location>
        <begin position="25"/>
        <end position="258"/>
    </location>
</feature>
<feature type="active site" description="Charge relay system" evidence="4">
    <location>
        <position position="65"/>
    </location>
</feature>
<feature type="active site" description="Charge relay system" evidence="4">
    <location>
        <position position="120"/>
    </location>
</feature>
<feature type="active site" description="Charge relay system" evidence="4">
    <location>
        <position position="213"/>
    </location>
</feature>
<feature type="glycosylation site" description="N-linked (GlcNAc...) asparagine">
    <location>
        <position position="69"/>
    </location>
</feature>
<feature type="disulfide bond" evidence="1 4">
    <location>
        <begin position="31"/>
        <end position="173"/>
    </location>
</feature>
<feature type="disulfide bond" evidence="1 4">
    <location>
        <begin position="50"/>
        <end position="66"/>
    </location>
</feature>
<feature type="disulfide bond" evidence="1 4">
    <location>
        <begin position="152"/>
        <end position="219"/>
    </location>
</feature>
<feature type="disulfide bond" evidence="1 4">
    <location>
        <begin position="184"/>
        <end position="198"/>
    </location>
</feature>
<feature type="disulfide bond" evidence="1 4">
    <location>
        <begin position="209"/>
        <end position="234"/>
    </location>
</feature>
<feature type="splice variant" id="VSP_046169" description="In isoform 3 and isoform 4." evidence="8">
    <original>N</original>
    <variation>K</variation>
    <location>
        <position position="69"/>
    </location>
</feature>
<feature type="splice variant" id="VSP_046170" description="In isoform 4." evidence="8">
    <location>
        <begin position="70"/>
        <end position="261"/>
    </location>
</feature>
<feature type="splice variant" id="VSP_046171" description="In isoform 3." evidence="8">
    <location>
        <begin position="70"/>
        <end position="112"/>
    </location>
</feature>
<feature type="splice variant" id="VSP_045786" description="In isoform 2." evidence="9">
    <original>GDSGGPLVCNGVLQGITSWGSEPCALPERPSLYTKVVHYRKWIKDTIVANP</original>
    <variation>WVILITELTMPALPMVLHGSLVPWRGGV</variation>
    <location>
        <begin position="211"/>
        <end position="261"/>
    </location>
</feature>
<feature type="splice variant" id="VSP_047643" description="In isoform 5." evidence="10">
    <original>GDSGGPLVCNGVLQGITSWGSEPCALPERPSLYTKVVHYRKWIKDTIVAN</original>
    <variation>VSHPYSQDLEGKGEWG</variation>
    <location>
        <begin position="211"/>
        <end position="260"/>
    </location>
</feature>
<feature type="sequence variant" id="VAR_021941" description="In dbSNP:rs2271092.">
    <original>E</original>
    <variation>K</variation>
    <location>
        <position position="32"/>
    </location>
</feature>
<feature type="sequence variant" id="VAR_021942" description="In dbSNP:rs2003783." evidence="5">
    <original>L</original>
    <variation>I</variation>
    <location>
        <position position="132"/>
    </location>
</feature>
<feature type="sequence variant" id="VAR_051852" description="In dbSNP:rs17632542.">
    <original>I</original>
    <variation>T</variation>
    <location>
        <position position="179"/>
    </location>
</feature>
<feature type="sequence conflict" description="In Ref. 15." evidence="11" ref="15">
    <original>A</original>
    <variation>T</variation>
    <location>
        <position position="64"/>
    </location>
</feature>
<feature type="sequence conflict" description="In Ref. 6; AAA60193." evidence="11" ref="6">
    <original>N</original>
    <variation>KC</variation>
    <location>
        <position position="69"/>
    </location>
</feature>
<feature type="sequence conflict" description="In Ref. 16; AA sequence." evidence="11" ref="16">
    <original>H</original>
    <variation>T</variation>
    <location>
        <position position="94"/>
    </location>
</feature>
<feature type="sequence conflict" description="In Ref. 15." evidence="11" ref="15">
    <original>V</original>
    <variation>M</variation>
    <location>
        <position position="136"/>
    </location>
</feature>
<feature type="sequence conflict" description="In Ref. 16; AA sequence." evidence="11" ref="16">
    <original>FLTP</original>
    <variation>HLLYDQM</variation>
    <location>
        <begin position="165"/>
        <end position="168"/>
    </location>
</feature>
<feature type="sequence conflict" description="In Ref. 16; AA sequence." evidence="11" ref="16">
    <original>D</original>
    <variation>Q</variation>
    <location>
        <position position="175"/>
    </location>
</feature>
<feature type="strand" evidence="12">
    <location>
        <begin position="39"/>
        <end position="56"/>
    </location>
</feature>
<feature type="strand" evidence="12">
    <location>
        <begin position="59"/>
        <end position="62"/>
    </location>
</feature>
<feature type="helix" evidence="12">
    <location>
        <begin position="64"/>
        <end position="66"/>
    </location>
</feature>
<feature type="helix" evidence="15">
    <location>
        <begin position="68"/>
        <end position="74"/>
    </location>
</feature>
<feature type="strand" evidence="12">
    <location>
        <begin position="78"/>
        <end position="82"/>
    </location>
</feature>
<feature type="strand" evidence="12">
    <location>
        <begin position="88"/>
        <end position="97"/>
    </location>
</feature>
<feature type="helix" evidence="12">
    <location>
        <begin position="103"/>
        <end position="106"/>
    </location>
</feature>
<feature type="strand" evidence="12">
    <location>
        <begin position="107"/>
        <end position="110"/>
    </location>
</feature>
<feature type="strand" evidence="12">
    <location>
        <begin position="122"/>
        <end position="128"/>
    </location>
</feature>
<feature type="strand" evidence="13">
    <location>
        <begin position="134"/>
        <end position="136"/>
    </location>
</feature>
<feature type="strand" evidence="12">
    <location>
        <begin position="151"/>
        <end position="157"/>
    </location>
</feature>
<feature type="strand" evidence="12">
    <location>
        <begin position="160"/>
        <end position="164"/>
    </location>
</feature>
<feature type="strand" evidence="12">
    <location>
        <begin position="172"/>
        <end position="179"/>
    </location>
</feature>
<feature type="helix" evidence="12">
    <location>
        <begin position="181"/>
        <end position="187"/>
    </location>
</feature>
<feature type="strand" evidence="12">
    <location>
        <begin position="189"/>
        <end position="191"/>
    </location>
</feature>
<feature type="strand" evidence="12">
    <location>
        <begin position="196"/>
        <end position="200"/>
    </location>
</feature>
<feature type="strand" evidence="12">
    <location>
        <begin position="216"/>
        <end position="229"/>
    </location>
</feature>
<feature type="strand" evidence="14">
    <location>
        <begin position="232"/>
        <end position="235"/>
    </location>
</feature>
<feature type="strand" evidence="12">
    <location>
        <begin position="241"/>
        <end position="245"/>
    </location>
</feature>
<feature type="helix" evidence="12">
    <location>
        <begin position="246"/>
        <end position="249"/>
    </location>
</feature>
<feature type="helix" evidence="12">
    <location>
        <begin position="250"/>
        <end position="258"/>
    </location>
</feature>
<accession>P07288</accession>
<accession>C9JXH3</accession>
<accession>G3V0H4</accession>
<accession>G3XAE3</accession>
<accession>Q15096</accession>
<accession>Q16272</accession>
<accession>Q86TG8</accession>
<accession>Q8IXI4</accession>
<proteinExistence type="evidence at protein level"/>
<reference key="1">
    <citation type="journal article" date="1987" name="FEBS Lett.">
        <title>Molecular cloning of human prostate specific antigen cDNA.</title>
        <authorList>
            <person name="Lundwall A."/>
            <person name="Lilja H."/>
        </authorList>
    </citation>
    <scope>NUCLEOTIDE SEQUENCE [MRNA] (ISOFORM 1)</scope>
    <scope>NUCLEOTIDE SEQUENCE [MRNA] OF 4-238 (ISOFORM 2)</scope>
    <scope>ALTERNATIVE SPLICING</scope>
    <source>
        <tissue>Prostate</tissue>
    </source>
</reference>
<reference key="2">
    <citation type="journal article" date="1989" name="Nucleic Acids Res.">
        <title>Human prostate specific antigen (PSA) gene: structure and linkage to the kallikrein-like gene, hGK-1.</title>
        <authorList>
            <person name="Digby M.R."/>
            <person name="Zhang X.Y."/>
            <person name="Richard R.I."/>
        </authorList>
    </citation>
    <scope>NUCLEOTIDE SEQUENCE [GENOMIC DNA]</scope>
    <source>
        <tissue>Prostate</tissue>
    </source>
</reference>
<reference key="3">
    <citation type="journal article" date="1989" name="Nucleic Acids Res.">
        <title>Genomic sequence of human prostate specific antigen (PSA).</title>
        <authorList>
            <person name="Klobeck H.-G."/>
            <person name="Combriato G."/>
            <person name="Schulz P."/>
            <person name="Arbusow V."/>
            <person name="Fittler F."/>
        </authorList>
    </citation>
    <scope>NUCLEOTIDE SEQUENCE [GENOMIC DNA]</scope>
</reference>
<reference key="4">
    <citation type="journal article" date="1989" name="Biochem. Biophys. Res. Commun.">
        <title>Characterization of the gene for prostate-specific antigen, a human glandular kallikrein.</title>
        <authorList>
            <person name="Lundwall A."/>
        </authorList>
    </citation>
    <scope>NUCLEOTIDE SEQUENCE [GENOMIC DNA]</scope>
    <source>
        <tissue>Leukocyte</tissue>
    </source>
</reference>
<reference key="5">
    <citation type="journal article" date="1989" name="Biochem. Biophys. Res. Commun.">
        <title>cDNA coding for the entire human prostate specific antigen shows high homologies to the human tissue kallikrein genes.</title>
        <authorList>
            <person name="Henttu P."/>
            <person name="Vihko P."/>
        </authorList>
    </citation>
    <scope>NUCLEOTIDE SEQUENCE [MRNA] (ISOFORM 1)</scope>
    <source>
        <tissue>Prostate</tissue>
    </source>
</reference>
<reference key="6">
    <citation type="journal article" date="1989" name="Biochem. Biophys. Res. Commun.">
        <title>Characterization of the prostate-specific antigen gene: a novel human kallikrein-like gene.</title>
        <authorList>
            <person name="Riegman P.H.J."/>
            <person name="Vlietstra R.J."/>
            <person name="van der Korput J.A.G.M."/>
            <person name="Romijn J.C."/>
            <person name="Trapman J."/>
        </authorList>
    </citation>
    <scope>NUCLEOTIDE SEQUENCE [GENOMIC DNA]</scope>
    <source>
        <tissue>Prostate</tissue>
    </source>
</reference>
<reference key="7">
    <citation type="journal article" date="1996" name="Urology">
        <title>A comparative analysis of prostate-specific antigen gene sequence in benign and malignant prostate tissue.</title>
        <authorList>
            <person name="Baffa R."/>
            <person name="Moreno J.G."/>
            <person name="Monne M."/>
            <person name="Veronese M.L."/>
            <person name="Gomella L.G."/>
        </authorList>
    </citation>
    <scope>NUCLEOTIDE SEQUENCE [MRNA] (ISOFORM 1)</scope>
    <source>
        <tissue>Prostate</tissue>
    </source>
</reference>
<reference key="8">
    <citation type="journal article" date="2000" name="Gene">
        <title>Sequencing and expression analysis of the serine protease gene cluster located in chromosome 19q13 region.</title>
        <authorList>
            <person name="Gan L."/>
            <person name="Lee I."/>
            <person name="Smith R."/>
            <person name="Argonza-Barrett R."/>
            <person name="Lei H."/>
            <person name="McCuaig J."/>
            <person name="Moss P."/>
            <person name="Paeper B."/>
            <person name="Wang K."/>
        </authorList>
    </citation>
    <scope>NUCLEOTIDE SEQUENCE [GENOMIC DNA]</scope>
</reference>
<reference key="9">
    <citation type="submission" date="2002-10" db="EMBL/GenBank/DDBJ databases">
        <title>Complex alternative splicing of the hKLK3 gene coding for the tumour marker PSA (prostate-specific-antigen).</title>
        <authorList>
            <person name="Heuze-Vourc'h N."/>
            <person name="Courty Y."/>
        </authorList>
    </citation>
    <scope>NUCLEOTIDE SEQUENCE [MRNA] (ISOFORM 5)</scope>
    <scope>ALTERNATIVE SPLICING</scope>
    <source>
        <tissue>Prostate</tissue>
    </source>
</reference>
<reference key="10">
    <citation type="submission" date="2004-10" db="EMBL/GenBank/DDBJ databases">
        <title>Cloning of human full-length CDSs in BD Creator(TM) system donor vector.</title>
        <authorList>
            <person name="Kalnine N."/>
            <person name="Chen X."/>
            <person name="Rolfs A."/>
            <person name="Halleck A."/>
            <person name="Hines L."/>
            <person name="Eisenstein S."/>
            <person name="Koundinya M."/>
            <person name="Raphael J."/>
            <person name="Moreira D."/>
            <person name="Kelley T."/>
            <person name="LaBaer J."/>
            <person name="Lin Y."/>
            <person name="Phelan M."/>
            <person name="Farmer A."/>
        </authorList>
    </citation>
    <scope>NUCLEOTIDE SEQUENCE [LARGE SCALE MRNA] (ISOFORM 1)</scope>
</reference>
<reference key="11">
    <citation type="journal article" date="2004" name="Nature">
        <title>The DNA sequence and biology of human chromosome 19.</title>
        <authorList>
            <person name="Grimwood J."/>
            <person name="Gordon L.A."/>
            <person name="Olsen A.S."/>
            <person name="Terry A."/>
            <person name="Schmutz J."/>
            <person name="Lamerdin J.E."/>
            <person name="Hellsten U."/>
            <person name="Goodstein D."/>
            <person name="Couronne O."/>
            <person name="Tran-Gyamfi M."/>
            <person name="Aerts A."/>
            <person name="Altherr M."/>
            <person name="Ashworth L."/>
            <person name="Bajorek E."/>
            <person name="Black S."/>
            <person name="Branscomb E."/>
            <person name="Caenepeel S."/>
            <person name="Carrano A.V."/>
            <person name="Caoile C."/>
            <person name="Chan Y.M."/>
            <person name="Christensen M."/>
            <person name="Cleland C.A."/>
            <person name="Copeland A."/>
            <person name="Dalin E."/>
            <person name="Dehal P."/>
            <person name="Denys M."/>
            <person name="Detter J.C."/>
            <person name="Escobar J."/>
            <person name="Flowers D."/>
            <person name="Fotopulos D."/>
            <person name="Garcia C."/>
            <person name="Georgescu A.M."/>
            <person name="Glavina T."/>
            <person name="Gomez M."/>
            <person name="Gonzales E."/>
            <person name="Groza M."/>
            <person name="Hammon N."/>
            <person name="Hawkins T."/>
            <person name="Haydu L."/>
            <person name="Ho I."/>
            <person name="Huang W."/>
            <person name="Israni S."/>
            <person name="Jett J."/>
            <person name="Kadner K."/>
            <person name="Kimball H."/>
            <person name="Kobayashi A."/>
            <person name="Larionov V."/>
            <person name="Leem S.-H."/>
            <person name="Lopez F."/>
            <person name="Lou Y."/>
            <person name="Lowry S."/>
            <person name="Malfatti S."/>
            <person name="Martinez D."/>
            <person name="McCready P.M."/>
            <person name="Medina C."/>
            <person name="Morgan J."/>
            <person name="Nelson K."/>
            <person name="Nolan M."/>
            <person name="Ovcharenko I."/>
            <person name="Pitluck S."/>
            <person name="Pollard M."/>
            <person name="Popkie A.P."/>
            <person name="Predki P."/>
            <person name="Quan G."/>
            <person name="Ramirez L."/>
            <person name="Rash S."/>
            <person name="Retterer J."/>
            <person name="Rodriguez A."/>
            <person name="Rogers S."/>
            <person name="Salamov A."/>
            <person name="Salazar A."/>
            <person name="She X."/>
            <person name="Smith D."/>
            <person name="Slezak T."/>
            <person name="Solovyev V."/>
            <person name="Thayer N."/>
            <person name="Tice H."/>
            <person name="Tsai M."/>
            <person name="Ustaszewska A."/>
            <person name="Vo N."/>
            <person name="Wagner M."/>
            <person name="Wheeler J."/>
            <person name="Wu K."/>
            <person name="Xie G."/>
            <person name="Yang J."/>
            <person name="Dubchak I."/>
            <person name="Furey T.S."/>
            <person name="DeJong P."/>
            <person name="Dickson M."/>
            <person name="Gordon D."/>
            <person name="Eichler E.E."/>
            <person name="Pennacchio L.A."/>
            <person name="Richardson P."/>
            <person name="Stubbs L."/>
            <person name="Rokhsar D.S."/>
            <person name="Myers R.M."/>
            <person name="Rubin E.M."/>
            <person name="Lucas S.M."/>
        </authorList>
    </citation>
    <scope>NUCLEOTIDE SEQUENCE [LARGE SCALE GENOMIC DNA]</scope>
</reference>
<reference key="12">
    <citation type="submission" date="2005-07" db="EMBL/GenBank/DDBJ databases">
        <authorList>
            <person name="Mural R.J."/>
            <person name="Istrail S."/>
            <person name="Sutton G."/>
            <person name="Florea L."/>
            <person name="Halpern A.L."/>
            <person name="Mobarry C.M."/>
            <person name="Lippert R."/>
            <person name="Walenz B."/>
            <person name="Shatkay H."/>
            <person name="Dew I."/>
            <person name="Miller J.R."/>
            <person name="Flanigan M.J."/>
            <person name="Edwards N.J."/>
            <person name="Bolanos R."/>
            <person name="Fasulo D."/>
            <person name="Halldorsson B.V."/>
            <person name="Hannenhalli S."/>
            <person name="Turner R."/>
            <person name="Yooseph S."/>
            <person name="Lu F."/>
            <person name="Nusskern D.R."/>
            <person name="Shue B.C."/>
            <person name="Zheng X.H."/>
            <person name="Zhong F."/>
            <person name="Delcher A.L."/>
            <person name="Huson D.H."/>
            <person name="Kravitz S.A."/>
            <person name="Mouchard L."/>
            <person name="Reinert K."/>
            <person name="Remington K.A."/>
            <person name="Clark A.G."/>
            <person name="Waterman M.S."/>
            <person name="Eichler E.E."/>
            <person name="Adams M.D."/>
            <person name="Hunkapiller M.W."/>
            <person name="Myers E.W."/>
            <person name="Venter J.C."/>
        </authorList>
    </citation>
    <scope>NUCLEOTIDE SEQUENCE [LARGE SCALE GENOMIC DNA]</scope>
</reference>
<reference key="13">
    <citation type="journal article" date="2004" name="Genome Res.">
        <title>The status, quality, and expansion of the NIH full-length cDNA project: the Mammalian Gene Collection (MGC).</title>
        <authorList>
            <consortium name="The MGC Project Team"/>
        </authorList>
    </citation>
    <scope>NUCLEOTIDE SEQUENCE [LARGE SCALE MRNA] (ISOFORMS 1; 3 AND 4)</scope>
    <source>
        <tissue>PNS</tissue>
        <tissue>Prostate</tissue>
        <tissue>Sciatic nerve</tissue>
    </source>
</reference>
<reference key="14">
    <citation type="journal article" date="1994" name="Cancer Res.">
        <title>Molecular characterization of prostate-specific antigen messenger RNA expressed in breast tumors.</title>
        <authorList>
            <person name="Monne M."/>
            <person name="Croce C.M."/>
            <person name="Yu H."/>
            <person name="Diamandis E.P."/>
        </authorList>
    </citation>
    <scope>NUCLEOTIDE SEQUENCE [MRNA] OF 1-176 (ISOFORM 1)</scope>
</reference>
<reference key="15">
    <citation type="journal article" date="1988" name="Nucleic Acids Res.">
        <title>Sequence of a cDNA clone encompassing the complete mature human prostate specific antigen (PSA) and an unspliced leader sequence.</title>
        <authorList>
            <person name="Schulz P."/>
            <person name="Stucka R."/>
            <person name="Feldmann H."/>
            <person name="Combriato G."/>
            <person name="Klobeck H.-G."/>
            <person name="Fittler F."/>
        </authorList>
    </citation>
    <scope>NUCLEOTIDE SEQUENCE [MRNA] OF 17-261 (ISOFORM 1)</scope>
</reference>
<reference key="16">
    <citation type="journal article" date="1986" name="Proc. Natl. Acad. Sci. U.S.A.">
        <title>Human prostate-specific antigen: structural and functional similarity with serine proteases.</title>
        <authorList>
            <person name="Watt K.W.K."/>
            <person name="Lee P.J."/>
            <person name="M'Timkulu T."/>
            <person name="Chan W.P."/>
            <person name="Loor R."/>
        </authorList>
    </citation>
    <scope>PROTEIN SEQUENCE OF 25-261</scope>
</reference>
<reference key="17">
    <citation type="journal article" date="1987" name="Eur. J. Biochem.">
        <title>Isolation, characterization and amino-acid sequence of gamma-seminoprotein, a glycoprotein from human seminal plasma.</title>
        <authorList>
            <person name="Schaller J."/>
            <person name="Akiyama K."/>
            <person name="Tsuda R."/>
            <person name="Hara M."/>
            <person name="Marti T."/>
            <person name="Rickli E.E."/>
        </authorList>
    </citation>
    <scope>PROTEIN SEQUENCE OF 25-261</scope>
</reference>
<reference key="18">
    <citation type="journal article" date="2004" name="Protein Sci.">
        <title>Signal peptide prediction based on analysis of experimentally verified cleavage sites.</title>
        <authorList>
            <person name="Zhang Z."/>
            <person name="Henzel W.J."/>
        </authorList>
    </citation>
    <scope>PROTEIN SEQUENCE OF 18-32</scope>
</reference>
<reference key="19">
    <citation type="journal article" date="2013" name="Mol. Cell. Proteomics">
        <title>Identification of a novel proteoform of prostate specific antigen (SNP-L132I) in clinical samples by multiple reaction monitoring.</title>
        <authorList>
            <person name="Vegvari A."/>
            <person name="Sjodin K."/>
            <person name="Rezeli M."/>
            <person name="Malm J."/>
            <person name="Lilja H."/>
            <person name="Laurell T."/>
            <person name="Marko-Varga G."/>
        </authorList>
    </citation>
    <scope>PROTEIN SEQUENCE OF 126-138</scope>
    <scope>VARIANT ILE-132</scope>
</reference>
<reference key="20">
    <citation type="journal article" date="1991" name="Thromb. Res.">
        <title>Functionally active protein C inhibitor/plasminogen activator inhibitor-3 (PCI/PAI-3) is secreted in seminal vesicles, occurs at high concentrations in human seminal plasma and complexes with prostate-specific antigen.</title>
        <authorList>
            <person name="Espana F."/>
            <person name="Gilabert J."/>
            <person name="Estelles A."/>
            <person name="Romeu A."/>
            <person name="Aznar J."/>
            <person name="Cabo A."/>
        </authorList>
    </citation>
    <scope>ACTIVITY REGULATION</scope>
    <scope>HETERODIMER WITH SERPINA5</scope>
</reference>
<reference key="21">
    <citation type="journal article" date="1994" name="Protein Sci.">
        <title>A structural model for the prostate disease marker, human prostate-specific antigen.</title>
        <authorList>
            <person name="Villoutreix B.O."/>
            <person name="Getzoff E.D."/>
            <person name="Griffin J.H."/>
        </authorList>
    </citation>
    <scope>3D-STRUCTURE MODELING</scope>
</reference>
<reference key="22">
    <citation type="journal article" date="1998" name="Chem. Biol.">
        <title>Substrate specificity of prostate-specific antigen (PSA).</title>
        <authorList>
            <person name="Coombs G.S."/>
            <person name="Bergstrom R.C."/>
            <person name="Pellequer J.L."/>
            <person name="Baker S.I."/>
            <person name="Navre M."/>
            <person name="Smith M.M."/>
            <person name="Tainer J.A."/>
            <person name="Madison E.L."/>
            <person name="Corey D.R."/>
        </authorList>
    </citation>
    <scope>3D-STRUCTURE MODELING</scope>
</reference>
<reference key="23">
    <citation type="journal article" date="2008" name="J. Mol. Biol.">
        <title>Crystal structure of a ternary complex between human prostate-specific antigen, its substrate acyl intermediate and an activating antibody.</title>
        <authorList>
            <person name="Menez R."/>
            <person name="Michel S."/>
            <person name="Muller B.H."/>
            <person name="Bossus M."/>
            <person name="Ducancel F."/>
            <person name="Jolivet-Reynaud C."/>
            <person name="Stura E.A."/>
        </authorList>
    </citation>
    <scope>X-RAY CRYSTALLOGRAPHY (2.83 ANGSTROMS) OF 25-261 IN COMPLEX WITH SUBSTRATE AND ACTIVATING ANTIBODY</scope>
    <scope>ACTIVITY REGULATION</scope>
    <scope>ACTIVE SITE</scope>
    <scope>DISULFIDE BONDS</scope>
</reference>